<name>RL11_CLONN</name>
<evidence type="ECO:0000255" key="1">
    <source>
        <dbReference type="HAMAP-Rule" id="MF_00736"/>
    </source>
</evidence>
<evidence type="ECO:0000305" key="2"/>
<comment type="function">
    <text evidence="1">Forms part of the ribosomal stalk which helps the ribosome interact with GTP-bound translation factors.</text>
</comment>
<comment type="subunit">
    <text evidence="1">Part of the ribosomal stalk of the 50S ribosomal subunit. Interacts with L10 and the large rRNA to form the base of the stalk. L10 forms an elongated spine to which L12 dimers bind in a sequential fashion forming a multimeric L10(L12)X complex.</text>
</comment>
<comment type="PTM">
    <text evidence="1">One or more lysine residues are methylated.</text>
</comment>
<comment type="similarity">
    <text evidence="1">Belongs to the universal ribosomal protein uL11 family.</text>
</comment>
<organism>
    <name type="scientific">Clostridium novyi (strain NT)</name>
    <dbReference type="NCBI Taxonomy" id="386415"/>
    <lineage>
        <taxon>Bacteria</taxon>
        <taxon>Bacillati</taxon>
        <taxon>Bacillota</taxon>
        <taxon>Clostridia</taxon>
        <taxon>Eubacteriales</taxon>
        <taxon>Clostridiaceae</taxon>
        <taxon>Clostridium</taxon>
    </lineage>
</organism>
<proteinExistence type="inferred from homology"/>
<accession>A0PXT4</accession>
<dbReference type="EMBL" id="CP000382">
    <property type="protein sequence ID" value="ABK61773.1"/>
    <property type="molecule type" value="Genomic_DNA"/>
</dbReference>
<dbReference type="RefSeq" id="WP_011721206.1">
    <property type="nucleotide sequence ID" value="NC_008593.1"/>
</dbReference>
<dbReference type="SMR" id="A0PXT4"/>
<dbReference type="STRING" id="386415.NT01CX_1103"/>
<dbReference type="KEGG" id="cno:NT01CX_1103"/>
<dbReference type="eggNOG" id="COG0080">
    <property type="taxonomic scope" value="Bacteria"/>
</dbReference>
<dbReference type="HOGENOM" id="CLU_074237_2_1_9"/>
<dbReference type="Proteomes" id="UP000008220">
    <property type="component" value="Chromosome"/>
</dbReference>
<dbReference type="GO" id="GO:0022625">
    <property type="term" value="C:cytosolic large ribosomal subunit"/>
    <property type="evidence" value="ECO:0007669"/>
    <property type="project" value="TreeGrafter"/>
</dbReference>
<dbReference type="GO" id="GO:0070180">
    <property type="term" value="F:large ribosomal subunit rRNA binding"/>
    <property type="evidence" value="ECO:0007669"/>
    <property type="project" value="UniProtKB-UniRule"/>
</dbReference>
<dbReference type="GO" id="GO:0003735">
    <property type="term" value="F:structural constituent of ribosome"/>
    <property type="evidence" value="ECO:0007669"/>
    <property type="project" value="InterPro"/>
</dbReference>
<dbReference type="GO" id="GO:0006412">
    <property type="term" value="P:translation"/>
    <property type="evidence" value="ECO:0007669"/>
    <property type="project" value="UniProtKB-UniRule"/>
</dbReference>
<dbReference type="CDD" id="cd00349">
    <property type="entry name" value="Ribosomal_L11"/>
    <property type="match status" value="1"/>
</dbReference>
<dbReference type="FunFam" id="1.10.10.250:FF:000001">
    <property type="entry name" value="50S ribosomal protein L11"/>
    <property type="match status" value="1"/>
</dbReference>
<dbReference type="FunFam" id="3.30.1550.10:FF:000001">
    <property type="entry name" value="50S ribosomal protein L11"/>
    <property type="match status" value="1"/>
</dbReference>
<dbReference type="Gene3D" id="1.10.10.250">
    <property type="entry name" value="Ribosomal protein L11, C-terminal domain"/>
    <property type="match status" value="1"/>
</dbReference>
<dbReference type="Gene3D" id="3.30.1550.10">
    <property type="entry name" value="Ribosomal protein L11/L12, N-terminal domain"/>
    <property type="match status" value="1"/>
</dbReference>
<dbReference type="HAMAP" id="MF_00736">
    <property type="entry name" value="Ribosomal_uL11"/>
    <property type="match status" value="1"/>
</dbReference>
<dbReference type="InterPro" id="IPR000911">
    <property type="entry name" value="Ribosomal_uL11"/>
</dbReference>
<dbReference type="InterPro" id="IPR006519">
    <property type="entry name" value="Ribosomal_uL11_bac-typ"/>
</dbReference>
<dbReference type="InterPro" id="IPR020783">
    <property type="entry name" value="Ribosomal_uL11_C"/>
</dbReference>
<dbReference type="InterPro" id="IPR036769">
    <property type="entry name" value="Ribosomal_uL11_C_sf"/>
</dbReference>
<dbReference type="InterPro" id="IPR020784">
    <property type="entry name" value="Ribosomal_uL11_N"/>
</dbReference>
<dbReference type="InterPro" id="IPR036796">
    <property type="entry name" value="Ribosomal_uL11_N_sf"/>
</dbReference>
<dbReference type="NCBIfam" id="TIGR01632">
    <property type="entry name" value="L11_bact"/>
    <property type="match status" value="1"/>
</dbReference>
<dbReference type="PANTHER" id="PTHR11661">
    <property type="entry name" value="60S RIBOSOMAL PROTEIN L12"/>
    <property type="match status" value="1"/>
</dbReference>
<dbReference type="PANTHER" id="PTHR11661:SF1">
    <property type="entry name" value="LARGE RIBOSOMAL SUBUNIT PROTEIN UL11M"/>
    <property type="match status" value="1"/>
</dbReference>
<dbReference type="Pfam" id="PF00298">
    <property type="entry name" value="Ribosomal_L11"/>
    <property type="match status" value="1"/>
</dbReference>
<dbReference type="Pfam" id="PF03946">
    <property type="entry name" value="Ribosomal_L11_N"/>
    <property type="match status" value="1"/>
</dbReference>
<dbReference type="SMART" id="SM00649">
    <property type="entry name" value="RL11"/>
    <property type="match status" value="1"/>
</dbReference>
<dbReference type="SUPFAM" id="SSF54747">
    <property type="entry name" value="Ribosomal L11/L12e N-terminal domain"/>
    <property type="match status" value="1"/>
</dbReference>
<dbReference type="SUPFAM" id="SSF46906">
    <property type="entry name" value="Ribosomal protein L11, C-terminal domain"/>
    <property type="match status" value="1"/>
</dbReference>
<feature type="chain" id="PRO_1000046170" description="Large ribosomal subunit protein uL11">
    <location>
        <begin position="1"/>
        <end position="141"/>
    </location>
</feature>
<gene>
    <name evidence="1" type="primary">rplK</name>
    <name type="ordered locus">NT01CX_1103</name>
</gene>
<keyword id="KW-0488">Methylation</keyword>
<keyword id="KW-1185">Reference proteome</keyword>
<keyword id="KW-0687">Ribonucleoprotein</keyword>
<keyword id="KW-0689">Ribosomal protein</keyword>
<keyword id="KW-0694">RNA-binding</keyword>
<keyword id="KW-0699">rRNA-binding</keyword>
<sequence>MAKKVVGMIKLQLPAGKATPAPPVGPALGQHGVNIMAFCKEYNAKTANQAGMTIPVIISVYQDRSFSFILKTPPAAVLIKKAAGLDSGSGEPNKTKVGKITKAQLKEIAETKMPDLNAGSVESAMSMIAGTARSMGITVEE</sequence>
<protein>
    <recommendedName>
        <fullName evidence="1">Large ribosomal subunit protein uL11</fullName>
    </recommendedName>
    <alternativeName>
        <fullName evidence="2">50S ribosomal protein L11</fullName>
    </alternativeName>
</protein>
<reference key="1">
    <citation type="journal article" date="2006" name="Nat. Biotechnol.">
        <title>The genome and transcriptomes of the anti-tumor agent Clostridium novyi-NT.</title>
        <authorList>
            <person name="Bettegowda C."/>
            <person name="Huang X."/>
            <person name="Lin J."/>
            <person name="Cheong I."/>
            <person name="Kohli M."/>
            <person name="Szabo S.A."/>
            <person name="Zhang X."/>
            <person name="Diaz L.A. Jr."/>
            <person name="Velculescu V.E."/>
            <person name="Parmigiani G."/>
            <person name="Kinzler K.W."/>
            <person name="Vogelstein B."/>
            <person name="Zhou S."/>
        </authorList>
    </citation>
    <scope>NUCLEOTIDE SEQUENCE [LARGE SCALE GENOMIC DNA]</scope>
    <source>
        <strain>NT</strain>
    </source>
</reference>